<keyword id="KW-0027">Amidation</keyword>
<keyword id="KW-0903">Direct protein sequencing</keyword>
<keyword id="KW-1015">Disulfide bond</keyword>
<keyword id="KW-0872">Ion channel impairing toxin</keyword>
<keyword id="KW-0528">Neurotoxin</keyword>
<keyword id="KW-0964">Secreted</keyword>
<keyword id="KW-0732">Signal</keyword>
<keyword id="KW-0800">Toxin</keyword>
<keyword id="KW-0738">Voltage-gated sodium channel impairing toxin</keyword>
<proteinExistence type="evidence at protein level"/>
<reference key="1">
    <citation type="journal article" date="2015" name="Peptides">
        <title>Biochemical and physiological characterization of a new Na-channel specific peptide from the venom of the Argentinean scorpion Tityus trivittatus.</title>
        <authorList>
            <person name="Coronas F.I."/>
            <person name="Diego-Garcia E."/>
            <person name="Restano-Cassulini R."/>
            <person name="de Roodt A.R."/>
            <person name="Possani L.D."/>
        </authorList>
    </citation>
    <scope>NUCLEOTIDE SEQUENCE [MRNA]</scope>
    <scope>PROTEIN SEQUENCE OF 21-45</scope>
    <scope>FUNCTION</scope>
    <scope>AMIDATION AT CYS-81 TOXIC DOSE</scope>
    <scope>MASS SPECTROMETRY</scope>
    <source>
        <tissue>Venom</tissue>
        <tissue>Venom gland</tissue>
    </source>
</reference>
<dbReference type="EMBL" id="KJ660065">
    <property type="protein sequence ID" value="AIA81145.1"/>
    <property type="molecule type" value="mRNA"/>
</dbReference>
<dbReference type="SMR" id="P0DMM8"/>
<dbReference type="GO" id="GO:0005576">
    <property type="term" value="C:extracellular region"/>
    <property type="evidence" value="ECO:0007669"/>
    <property type="project" value="UniProtKB-SubCell"/>
</dbReference>
<dbReference type="GO" id="GO:0019871">
    <property type="term" value="F:sodium channel inhibitor activity"/>
    <property type="evidence" value="ECO:0007669"/>
    <property type="project" value="InterPro"/>
</dbReference>
<dbReference type="GO" id="GO:0090729">
    <property type="term" value="F:toxin activity"/>
    <property type="evidence" value="ECO:0007669"/>
    <property type="project" value="UniProtKB-KW"/>
</dbReference>
<dbReference type="GO" id="GO:0006952">
    <property type="term" value="P:defense response"/>
    <property type="evidence" value="ECO:0007669"/>
    <property type="project" value="InterPro"/>
</dbReference>
<dbReference type="CDD" id="cd23106">
    <property type="entry name" value="neurotoxins_LC_scorpion"/>
    <property type="match status" value="1"/>
</dbReference>
<dbReference type="FunFam" id="3.30.30.10:FF:000002">
    <property type="entry name" value="Alpha-like toxin BmK-M1"/>
    <property type="match status" value="1"/>
</dbReference>
<dbReference type="Gene3D" id="3.30.30.10">
    <property type="entry name" value="Knottin, scorpion toxin-like"/>
    <property type="match status" value="1"/>
</dbReference>
<dbReference type="InterPro" id="IPR044062">
    <property type="entry name" value="LCN-type_CS_alpha_beta_dom"/>
</dbReference>
<dbReference type="InterPro" id="IPR003614">
    <property type="entry name" value="Scorpion_toxin-like"/>
</dbReference>
<dbReference type="InterPro" id="IPR036574">
    <property type="entry name" value="Scorpion_toxin-like_sf"/>
</dbReference>
<dbReference type="InterPro" id="IPR018218">
    <property type="entry name" value="Scorpion_toxinL"/>
</dbReference>
<dbReference type="InterPro" id="IPR002061">
    <property type="entry name" value="Scorpion_toxinL/defensin"/>
</dbReference>
<dbReference type="Pfam" id="PF00537">
    <property type="entry name" value="Toxin_3"/>
    <property type="match status" value="1"/>
</dbReference>
<dbReference type="PRINTS" id="PR00285">
    <property type="entry name" value="SCORPNTOXIN"/>
</dbReference>
<dbReference type="SMART" id="SM00505">
    <property type="entry name" value="Knot1"/>
    <property type="match status" value="1"/>
</dbReference>
<dbReference type="SUPFAM" id="SSF57095">
    <property type="entry name" value="Scorpion toxin-like"/>
    <property type="match status" value="1"/>
</dbReference>
<dbReference type="PROSITE" id="PS51863">
    <property type="entry name" value="LCN_CSAB"/>
    <property type="match status" value="1"/>
</dbReference>
<protein>
    <recommendedName>
        <fullName>Beta-mammal Tt1g</fullName>
    </recommendedName>
    <alternativeName>
        <fullName>T.trivittatus toxin 1 gamma-like</fullName>
    </alternativeName>
</protein>
<evidence type="ECO:0000255" key="1">
    <source>
        <dbReference type="PROSITE-ProRule" id="PRU01210"/>
    </source>
</evidence>
<evidence type="ECO:0000269" key="2">
    <source>
    </source>
</evidence>
<evidence type="ECO:0000305" key="3"/>
<evidence type="ECO:0000305" key="4">
    <source>
    </source>
</evidence>
<organism>
    <name type="scientific">Tityus trivittatus</name>
    <name type="common">Argentinean scorpion</name>
    <dbReference type="NCBI Taxonomy" id="369776"/>
    <lineage>
        <taxon>Eukaryota</taxon>
        <taxon>Metazoa</taxon>
        <taxon>Ecdysozoa</taxon>
        <taxon>Arthropoda</taxon>
        <taxon>Chelicerata</taxon>
        <taxon>Arachnida</taxon>
        <taxon>Scorpiones</taxon>
        <taxon>Buthida</taxon>
        <taxon>Buthoidea</taxon>
        <taxon>Buthidae</taxon>
        <taxon>Tityus</taxon>
    </lineage>
</organism>
<accession>P0DMM8</accession>
<accession>A0A060BIT6</accession>
<name>SCX1_TITTR</name>
<sequence>MKGMILFISCILLIGIVVECKEGYLMDHEGCKLSCFIRPSGYCGRECAIKKGSSGYCAWPACYCYGLPNWVKVWERATNRCGKK</sequence>
<comment type="function">
    <text evidence="2">Beta toxins modify sodium channel function in two ways: an excitatory effect (shifting the activation process to more negative potential) and/or a depressant effect (reducing the peak current). At concentration of 500 nM this toxin produces channel opening at more negative potentials in hNav1.2/SCN2A and hNav1.3/SCN3A, which shows the biggest effect. On the other hand the peak current is decreased in hNav1.4/SCN4A and hNav1.5/SCN5A channels, without apparent modification of the activation gate. This toxin is active against mammals.</text>
</comment>
<comment type="subcellular location">
    <subcellularLocation>
        <location>Secreted</location>
    </subcellularLocation>
</comment>
<comment type="tissue specificity">
    <text>Expressed by the venom gland.</text>
</comment>
<comment type="domain">
    <text evidence="3">Has the structural arrangement of an alpha-helix connected to antiparallel beta-sheets by disulfide bonds (CS-alpha/beta).</text>
</comment>
<comment type="mass spectrometry"/>
<comment type="toxic dose">
    <text>LD(50) is 28.5 ug/kg by intracranial injection into mice.</text>
</comment>
<comment type="miscellaneous">
    <text evidence="4">Negative results: does not produce significant modification of hNav1.1/SCN1A and hNav1.6/SCN8A currents.</text>
</comment>
<comment type="miscellaneous">
    <text evidence="4">This toxin is thought to be responsible for the intoxication symptoms caused by the sting of this species to humans.</text>
</comment>
<comment type="similarity">
    <text evidence="3">Belongs to the long (4 C-C) scorpion toxin superfamily. Sodium channel inhibitor family. Beta subfamily.</text>
</comment>
<feature type="signal peptide" evidence="2">
    <location>
        <begin position="1"/>
        <end position="20"/>
    </location>
</feature>
<feature type="chain" id="PRO_0000430182" description="Beta-mammal Tt1g">
    <location>
        <begin position="21"/>
        <end position="81"/>
    </location>
</feature>
<feature type="domain" description="LCN-type CS-alpha/beta" evidence="1">
    <location>
        <begin position="21"/>
        <end position="82"/>
    </location>
</feature>
<feature type="modified residue" description="Cysteine amide" evidence="2">
    <location>
        <position position="81"/>
    </location>
</feature>
<feature type="disulfide bond" evidence="1">
    <location>
        <begin position="31"/>
        <end position="81"/>
    </location>
</feature>
<feature type="disulfide bond" evidence="1">
    <location>
        <begin position="35"/>
        <end position="57"/>
    </location>
</feature>
<feature type="disulfide bond" evidence="1">
    <location>
        <begin position="43"/>
        <end position="62"/>
    </location>
</feature>
<feature type="disulfide bond" evidence="1">
    <location>
        <begin position="47"/>
        <end position="64"/>
    </location>
</feature>